<reference key="1">
    <citation type="journal article" date="1999" name="Proc. Natl. Acad. Sci. U.S.A.">
        <title>Activation and repression of transcription by auxin-response factors.</title>
        <authorList>
            <person name="Ulmasov T."/>
            <person name="Hagen G."/>
            <person name="Guilfoyle T.J."/>
        </authorList>
    </citation>
    <scope>NUCLEOTIDE SEQUENCE [MRNA]</scope>
    <source>
        <strain>cv. Columbia</strain>
    </source>
</reference>
<reference key="2">
    <citation type="journal article" date="1998" name="DNA Res.">
        <title>Structural analysis of Arabidopsis thaliana chromosome 5. V. Sequence features of the regions of 1,381,565 bp covered by twenty one physically assigned P1 and TAC clones.</title>
        <authorList>
            <person name="Kaneko T."/>
            <person name="Kotani H."/>
            <person name="Nakamura Y."/>
            <person name="Sato S."/>
            <person name="Asamizu E."/>
            <person name="Miyajima N."/>
            <person name="Tabata S."/>
        </authorList>
    </citation>
    <scope>NUCLEOTIDE SEQUENCE [LARGE SCALE GENOMIC DNA]</scope>
    <source>
        <strain>cv. Columbia</strain>
    </source>
</reference>
<reference key="3">
    <citation type="journal article" date="2017" name="Plant J.">
        <title>Araport11: a complete reannotation of the Arabidopsis thaliana reference genome.</title>
        <authorList>
            <person name="Cheng C.Y."/>
            <person name="Krishnakumar V."/>
            <person name="Chan A.P."/>
            <person name="Thibaud-Nissen F."/>
            <person name="Schobel S."/>
            <person name="Town C.D."/>
        </authorList>
    </citation>
    <scope>GENOME REANNOTATION</scope>
    <source>
        <strain>cv. Columbia</strain>
    </source>
</reference>
<reference key="4">
    <citation type="journal article" date="2003" name="Science">
        <title>Empirical analysis of transcriptional activity in the Arabidopsis genome.</title>
        <authorList>
            <person name="Yamada K."/>
            <person name="Lim J."/>
            <person name="Dale J.M."/>
            <person name="Chen H."/>
            <person name="Shinn P."/>
            <person name="Palm C.J."/>
            <person name="Southwick A.M."/>
            <person name="Wu H.C."/>
            <person name="Kim C.J."/>
            <person name="Nguyen M."/>
            <person name="Pham P.K."/>
            <person name="Cheuk R.F."/>
            <person name="Karlin-Newmann G."/>
            <person name="Liu S.X."/>
            <person name="Lam B."/>
            <person name="Sakano H."/>
            <person name="Wu T."/>
            <person name="Yu G."/>
            <person name="Miranda M."/>
            <person name="Quach H.L."/>
            <person name="Tripp M."/>
            <person name="Chang C.H."/>
            <person name="Lee J.M."/>
            <person name="Toriumi M.J."/>
            <person name="Chan M.M."/>
            <person name="Tang C.C."/>
            <person name="Onodera C.S."/>
            <person name="Deng J.M."/>
            <person name="Akiyama K."/>
            <person name="Ansari Y."/>
            <person name="Arakawa T."/>
            <person name="Banh J."/>
            <person name="Banno F."/>
            <person name="Bowser L."/>
            <person name="Brooks S.Y."/>
            <person name="Carninci P."/>
            <person name="Chao Q."/>
            <person name="Choy N."/>
            <person name="Enju A."/>
            <person name="Goldsmith A.D."/>
            <person name="Gurjal M."/>
            <person name="Hansen N.F."/>
            <person name="Hayashizaki Y."/>
            <person name="Johnson-Hopson C."/>
            <person name="Hsuan V.W."/>
            <person name="Iida K."/>
            <person name="Karnes M."/>
            <person name="Khan S."/>
            <person name="Koesema E."/>
            <person name="Ishida J."/>
            <person name="Jiang P.X."/>
            <person name="Jones T."/>
            <person name="Kawai J."/>
            <person name="Kamiya A."/>
            <person name="Meyers C."/>
            <person name="Nakajima M."/>
            <person name="Narusaka M."/>
            <person name="Seki M."/>
            <person name="Sakurai T."/>
            <person name="Satou M."/>
            <person name="Tamse R."/>
            <person name="Vaysberg M."/>
            <person name="Wallender E.K."/>
            <person name="Wong C."/>
            <person name="Yamamura Y."/>
            <person name="Yuan S."/>
            <person name="Shinozaki K."/>
            <person name="Davis R.W."/>
            <person name="Theologis A."/>
            <person name="Ecker J.R."/>
        </authorList>
    </citation>
    <scope>NUCLEOTIDE SEQUENCE [LARGE SCALE MRNA]</scope>
    <source>
        <strain>cv. Columbia</strain>
    </source>
</reference>
<reference key="5">
    <citation type="journal article" date="1999" name="Plant J.">
        <title>Dimerization and DNA binding of auxin response factors.</title>
        <authorList>
            <person name="Ulmasov T."/>
            <person name="Hagen G."/>
            <person name="Guilfoyle T.J."/>
        </authorList>
    </citation>
    <scope>DIMERIZATION</scope>
    <scope>TISSUE SPECIFICITY</scope>
</reference>
<reference key="6">
    <citation type="journal article" date="2002" name="Plant Mol. Biol.">
        <title>Auxin-responsive gene expression: genes, promoters and regulatory factors.</title>
        <authorList>
            <person name="Hagen G."/>
            <person name="Guilfoyle T.J."/>
        </authorList>
    </citation>
    <scope>GENE FAMILY</scope>
    <scope>NOMENCLATURE</scope>
    <scope>FUNCTION</scope>
</reference>
<reference key="7">
    <citation type="journal article" date="2008" name="Trends Plant Sci.">
        <title>The plant B3 superfamily.</title>
        <authorList>
            <person name="Swaminathan K."/>
            <person name="Peterson K."/>
            <person name="Jack T."/>
        </authorList>
    </citation>
    <scope>GENE FAMILY</scope>
</reference>
<reference key="8">
    <citation type="journal article" date="2016" name="Biol. Open">
        <title>A genetic link between epigenetic repressor AS1-AS2 and a putative small subunit processome in leaf polarity establishment of Arabidopsis.</title>
        <authorList>
            <person name="Matsumura Y."/>
            <person name="Ohbayashi I."/>
            <person name="Takahashi H."/>
            <person name="Kojima S."/>
            <person name="Ishibashi N."/>
            <person name="Keta S."/>
            <person name="Nakagawa A."/>
            <person name="Hayashi R."/>
            <person name="Saez-Vasquez J."/>
            <person name="Echeverria M."/>
            <person name="Sugiyama M."/>
            <person name="Nakamura K."/>
            <person name="Machida C."/>
            <person name="Machida Y."/>
        </authorList>
    </citation>
    <scope>DISRUPTION PHENOTYPE</scope>
</reference>
<proteinExistence type="evidence at protein level"/>
<feature type="chain" id="PRO_0000111508" description="Auxin response factor 4">
    <location>
        <begin position="1"/>
        <end position="788"/>
    </location>
</feature>
<feature type="domain" description="PB1" evidence="3">
    <location>
        <begin position="665"/>
        <end position="747"/>
    </location>
</feature>
<feature type="DNA-binding region" description="TF-B3" evidence="2">
    <location>
        <begin position="177"/>
        <end position="279"/>
    </location>
</feature>
<feature type="region of interest" description="Disordered" evidence="4">
    <location>
        <begin position="1"/>
        <end position="53"/>
    </location>
</feature>
<feature type="region of interest" description="Disordered" evidence="4">
    <location>
        <begin position="413"/>
        <end position="433"/>
    </location>
</feature>
<feature type="compositionally biased region" description="Acidic residues" evidence="4">
    <location>
        <begin position="1"/>
        <end position="19"/>
    </location>
</feature>
<feature type="compositionally biased region" description="Low complexity" evidence="4">
    <location>
        <begin position="38"/>
        <end position="53"/>
    </location>
</feature>
<comment type="function">
    <text evidence="6">Auxin response factors (ARFs) are transcriptional factors that bind specifically to the DNA sequence 5'-TGTCTC-3' found in the auxin-responsive promoter elements (AuxREs). Could act as transcriptional activator or repressor. Formation of heterodimers with Aux/IAA proteins may alter their ability to modulate early auxin response genes expression.</text>
</comment>
<comment type="subunit">
    <text evidence="1">Homodimers and heterodimers.</text>
</comment>
<comment type="interaction">
    <interactant intactId="EBI-3946495">
        <id>Q9ZTX9</id>
    </interactant>
    <interactant intactId="EBI-632257">
        <id>O24409</id>
        <label>IAA19</label>
    </interactant>
    <organismsDiffer>false</organismsDiffer>
    <experiments>2</experiments>
</comment>
<comment type="subcellular location">
    <subcellularLocation>
        <location>Nucleus</location>
    </subcellularLocation>
</comment>
<comment type="tissue specificity">
    <text evidence="5">Expressed in the whole plant.</text>
</comment>
<comment type="domain">
    <text>Interactions between auxin response factors (ARFs) and Aux/IAA proteins occur through their C-terminal dimerization domains III and IV.</text>
</comment>
<comment type="disruption phenotype">
    <text evidence="7">Double mutations in this protein and in ARF3 protein significantly suppresses the adaxial development defect of leaves of the AS2 and RH10 proteins double mutant at high temperatures.</text>
</comment>
<comment type="similarity">
    <text evidence="8">Belongs to the ARF family.</text>
</comment>
<accession>Q9ZTX9</accession>
<evidence type="ECO:0000250" key="1"/>
<evidence type="ECO:0000255" key="2">
    <source>
        <dbReference type="PROSITE-ProRule" id="PRU00326"/>
    </source>
</evidence>
<evidence type="ECO:0000255" key="3">
    <source>
        <dbReference type="PROSITE-ProRule" id="PRU01081"/>
    </source>
</evidence>
<evidence type="ECO:0000256" key="4">
    <source>
        <dbReference type="SAM" id="MobiDB-lite"/>
    </source>
</evidence>
<evidence type="ECO:0000269" key="5">
    <source>
    </source>
</evidence>
<evidence type="ECO:0000269" key="6">
    <source>
    </source>
</evidence>
<evidence type="ECO:0000269" key="7">
    <source>
    </source>
</evidence>
<evidence type="ECO:0000305" key="8"/>
<organism>
    <name type="scientific">Arabidopsis thaliana</name>
    <name type="common">Mouse-ear cress</name>
    <dbReference type="NCBI Taxonomy" id="3702"/>
    <lineage>
        <taxon>Eukaryota</taxon>
        <taxon>Viridiplantae</taxon>
        <taxon>Streptophyta</taxon>
        <taxon>Embryophyta</taxon>
        <taxon>Tracheophyta</taxon>
        <taxon>Spermatophyta</taxon>
        <taxon>Magnoliopsida</taxon>
        <taxon>eudicotyledons</taxon>
        <taxon>Gunneridae</taxon>
        <taxon>Pentapetalae</taxon>
        <taxon>rosids</taxon>
        <taxon>malvids</taxon>
        <taxon>Brassicales</taxon>
        <taxon>Brassicaceae</taxon>
        <taxon>Camelineae</taxon>
        <taxon>Arabidopsis</taxon>
    </lineage>
</organism>
<sequence length="788" mass="87284">MEFDLNTEIAEVEEEENDDVGVGVGGGTRIDKGRLGISPSSSSSCSSGSSSSSSSTGSASSIYSELWHACAGPLTCLPKKGNVVVYFPQGHLEQDAMVSYSSPLEIPKFDLNPQIVCRVVNVQLLANKDTDEVYTQVTLLPLQEFSMLNGEGKEVKELGGEEERNGSSSVKRTPHMFCKTLTASDTSTHGGFSVPRRAAEDCFAPLDYKQQRPSQELIAKDLHGVEWKFRHIYRGQPRRHLLTTGWSIFVSQKNLVSGDAVLFLRDEGGELRLGIRRAARPRNGLPDSIIEKNSCSNILSLVANAVSTKSMFHVFYSPRATHAEFVIPYEKYITSIRSPVCIGTRFRMRFEMDDSPERRCAGVVTGVCDLDPYRWPNSKWRCLLVRWDESFVSDHQERVSPWEIDPSVSLPHLSIQSSPRPKRPWAGLLDTTPPGNPITKRGGFLDFEESVRPSKVLQGQENIGSASPSQGFDVMNRRILDFAMQSHANPVLVSSRVKDRFGEFVDATGVNPACSGVMDLDRFPRVLQGQEICSLKSFPQFAGFSPAAAPNPFAYQANKSSYYPLALHGIRSTHVPYQNPYNAGNQSSGPPSRAINFGEETRKFDAQNEGGLPNNVTADLPFKIDMMGKQKGSELNMNASSGCKLFGFSLPVETPASKPQSSSKRICTKVHKQGSQVGRAIDLSRLNGYDDLLMELERLFNMEGLLRDPEKGWRILYTDSENDMMVVGDDPWHDFCNVVWKIHLYTKEEVENANDDNKSCLEQAALMMEASKSSSVSQPDSSPTITRV</sequence>
<gene>
    <name type="primary">ARF4</name>
    <name type="ordered locus">At5g60450</name>
    <name type="ORF">MUF9.8</name>
</gene>
<keyword id="KW-0927">Auxin signaling pathway</keyword>
<keyword id="KW-0238">DNA-binding</keyword>
<keyword id="KW-0539">Nucleus</keyword>
<keyword id="KW-1185">Reference proteome</keyword>
<keyword id="KW-0804">Transcription</keyword>
<keyword id="KW-0805">Transcription regulation</keyword>
<name>ARFD_ARATH</name>
<protein>
    <recommendedName>
        <fullName>Auxin response factor 4</fullName>
    </recommendedName>
</protein>
<dbReference type="EMBL" id="AF013466">
    <property type="protein sequence ID" value="AAD01512.1"/>
    <property type="molecule type" value="mRNA"/>
</dbReference>
<dbReference type="EMBL" id="AB011483">
    <property type="protein sequence ID" value="BAB08228.1"/>
    <property type="molecule type" value="Genomic_DNA"/>
</dbReference>
<dbReference type="EMBL" id="CP002688">
    <property type="protein sequence ID" value="AED97332.1"/>
    <property type="molecule type" value="Genomic_DNA"/>
</dbReference>
<dbReference type="EMBL" id="AF344313">
    <property type="protein sequence ID" value="AAK06864.1"/>
    <property type="molecule type" value="mRNA"/>
</dbReference>
<dbReference type="EMBL" id="AY080832">
    <property type="protein sequence ID" value="AAL87308.1"/>
    <property type="molecule type" value="mRNA"/>
</dbReference>
<dbReference type="EMBL" id="AY113977">
    <property type="protein sequence ID" value="AAM45025.1"/>
    <property type="molecule type" value="mRNA"/>
</dbReference>
<dbReference type="RefSeq" id="NP_200853.1">
    <property type="nucleotide sequence ID" value="NM_125438.4"/>
</dbReference>
<dbReference type="SMR" id="Q9ZTX9"/>
<dbReference type="BioGRID" id="21410">
    <property type="interactions" value="35"/>
</dbReference>
<dbReference type="FunCoup" id="Q9ZTX9">
    <property type="interactions" value="561"/>
</dbReference>
<dbReference type="IntAct" id="Q9ZTX9">
    <property type="interactions" value="18"/>
</dbReference>
<dbReference type="STRING" id="3702.Q9ZTX9"/>
<dbReference type="GlyGen" id="Q9ZTX9">
    <property type="glycosylation" value="1 site, 1 O-linked glycan (1 site)"/>
</dbReference>
<dbReference type="PaxDb" id="3702-AT5G60450.1"/>
<dbReference type="ProteomicsDB" id="241056"/>
<dbReference type="EnsemblPlants" id="AT5G60450.1">
    <property type="protein sequence ID" value="AT5G60450.1"/>
    <property type="gene ID" value="AT5G60450"/>
</dbReference>
<dbReference type="GeneID" id="836166"/>
<dbReference type="Gramene" id="AT5G60450.1">
    <property type="protein sequence ID" value="AT5G60450.1"/>
    <property type="gene ID" value="AT5G60450"/>
</dbReference>
<dbReference type="KEGG" id="ath:AT5G60450"/>
<dbReference type="Araport" id="AT5G60450"/>
<dbReference type="TAIR" id="AT5G60450">
    <property type="gene designation" value="ARF4"/>
</dbReference>
<dbReference type="eggNOG" id="ENOG502QTCY">
    <property type="taxonomic scope" value="Eukaryota"/>
</dbReference>
<dbReference type="HOGENOM" id="CLU_002626_2_2_1"/>
<dbReference type="InParanoid" id="Q9ZTX9"/>
<dbReference type="PhylomeDB" id="Q9ZTX9"/>
<dbReference type="PRO" id="PR:Q9ZTX9"/>
<dbReference type="Proteomes" id="UP000006548">
    <property type="component" value="Chromosome 5"/>
</dbReference>
<dbReference type="ExpressionAtlas" id="Q9ZTX9">
    <property type="expression patterns" value="baseline and differential"/>
</dbReference>
<dbReference type="GO" id="GO:0005634">
    <property type="term" value="C:nucleus"/>
    <property type="evidence" value="ECO:0007669"/>
    <property type="project" value="UniProtKB-SubCell"/>
</dbReference>
<dbReference type="GO" id="GO:0003700">
    <property type="term" value="F:DNA-binding transcription factor activity"/>
    <property type="evidence" value="ECO:0000250"/>
    <property type="project" value="TAIR"/>
</dbReference>
<dbReference type="GO" id="GO:0000976">
    <property type="term" value="F:transcription cis-regulatory region binding"/>
    <property type="evidence" value="ECO:0000353"/>
    <property type="project" value="TAIR"/>
</dbReference>
<dbReference type="GO" id="GO:0010158">
    <property type="term" value="P:abaxial cell fate specification"/>
    <property type="evidence" value="ECO:0000316"/>
    <property type="project" value="TAIR"/>
</dbReference>
<dbReference type="GO" id="GO:0009734">
    <property type="term" value="P:auxin-activated signaling pathway"/>
    <property type="evidence" value="ECO:0007669"/>
    <property type="project" value="UniProtKB-KW"/>
</dbReference>
<dbReference type="GO" id="GO:0010050">
    <property type="term" value="P:vegetative phase change"/>
    <property type="evidence" value="ECO:0000316"/>
    <property type="project" value="TAIR"/>
</dbReference>
<dbReference type="CDD" id="cd10017">
    <property type="entry name" value="B3_DNA"/>
    <property type="match status" value="1"/>
</dbReference>
<dbReference type="FunFam" id="2.30.30.1040:FF:000001">
    <property type="entry name" value="Auxin response factor"/>
    <property type="match status" value="1"/>
</dbReference>
<dbReference type="FunFam" id="2.40.330.10:FF:000001">
    <property type="entry name" value="Auxin response factor"/>
    <property type="match status" value="1"/>
</dbReference>
<dbReference type="FunFam" id="3.10.20.90:FF:000047">
    <property type="entry name" value="Auxin response factor"/>
    <property type="match status" value="1"/>
</dbReference>
<dbReference type="Gene3D" id="2.30.30.1040">
    <property type="match status" value="1"/>
</dbReference>
<dbReference type="Gene3D" id="2.40.330.10">
    <property type="entry name" value="DNA-binding pseudobarrel domain"/>
    <property type="match status" value="1"/>
</dbReference>
<dbReference type="Gene3D" id="3.10.20.90">
    <property type="entry name" value="Phosphatidylinositol 3-kinase Catalytic Subunit, Chain A, domain 1"/>
    <property type="match status" value="1"/>
</dbReference>
<dbReference type="InterPro" id="IPR010525">
    <property type="entry name" value="ARF_dom"/>
</dbReference>
<dbReference type="InterPro" id="IPR044835">
    <property type="entry name" value="ARF_plant"/>
</dbReference>
<dbReference type="InterPro" id="IPR003340">
    <property type="entry name" value="B3_DNA-bd"/>
</dbReference>
<dbReference type="InterPro" id="IPR015300">
    <property type="entry name" value="DNA-bd_pseudobarrel_sf"/>
</dbReference>
<dbReference type="InterPro" id="IPR053793">
    <property type="entry name" value="PB1-like"/>
</dbReference>
<dbReference type="PANTHER" id="PTHR31384:SF102">
    <property type="entry name" value="AUXIN RESPONSE FACTOR 4"/>
    <property type="match status" value="1"/>
</dbReference>
<dbReference type="PANTHER" id="PTHR31384">
    <property type="entry name" value="AUXIN RESPONSE FACTOR 4-RELATED"/>
    <property type="match status" value="1"/>
</dbReference>
<dbReference type="Pfam" id="PF06507">
    <property type="entry name" value="ARF_AD"/>
    <property type="match status" value="1"/>
</dbReference>
<dbReference type="Pfam" id="PF02362">
    <property type="entry name" value="B3"/>
    <property type="match status" value="1"/>
</dbReference>
<dbReference type="SMART" id="SM01019">
    <property type="entry name" value="B3"/>
    <property type="match status" value="1"/>
</dbReference>
<dbReference type="SUPFAM" id="SSF54277">
    <property type="entry name" value="CAD &amp; PB1 domains"/>
    <property type="match status" value="1"/>
</dbReference>
<dbReference type="SUPFAM" id="SSF101936">
    <property type="entry name" value="DNA-binding pseudobarrel domain"/>
    <property type="match status" value="1"/>
</dbReference>
<dbReference type="PROSITE" id="PS50863">
    <property type="entry name" value="B3"/>
    <property type="match status" value="1"/>
</dbReference>
<dbReference type="PROSITE" id="PS51745">
    <property type="entry name" value="PB1"/>
    <property type="match status" value="1"/>
</dbReference>